<organism>
    <name type="scientific">Staphylococcus aureus (strain Mu3 / ATCC 700698)</name>
    <dbReference type="NCBI Taxonomy" id="418127"/>
    <lineage>
        <taxon>Bacteria</taxon>
        <taxon>Bacillati</taxon>
        <taxon>Bacillota</taxon>
        <taxon>Bacilli</taxon>
        <taxon>Bacillales</taxon>
        <taxon>Staphylococcaceae</taxon>
        <taxon>Staphylococcus</taxon>
    </lineage>
</organism>
<sequence>MEARDILKRPVITEKSSEAMAEDKYTFDVDTRVNKTQVKMAVEEIFNVKVASVNIMNYKPKKKRMGRYQGYTNKRRKAIVTLKEGSIDLFN</sequence>
<evidence type="ECO:0000255" key="1">
    <source>
        <dbReference type="HAMAP-Rule" id="MF_01369"/>
    </source>
</evidence>
<evidence type="ECO:0000305" key="2"/>
<keyword id="KW-0687">Ribonucleoprotein</keyword>
<keyword id="KW-0689">Ribosomal protein</keyword>
<keyword id="KW-0694">RNA-binding</keyword>
<keyword id="KW-0699">rRNA-binding</keyword>
<protein>
    <recommendedName>
        <fullName evidence="1">Large ribosomal subunit protein uL23</fullName>
    </recommendedName>
    <alternativeName>
        <fullName evidence="2">50S ribosomal protein L23</fullName>
    </alternativeName>
</protein>
<name>RL23_STAA1</name>
<comment type="function">
    <text evidence="1">One of the early assembly proteins it binds 23S rRNA. One of the proteins that surrounds the polypeptide exit tunnel on the outside of the ribosome. Forms the main docking site for trigger factor binding to the ribosome.</text>
</comment>
<comment type="subunit">
    <text evidence="1">Part of the 50S ribosomal subunit. Contacts protein L29, and trigger factor when it is bound to the ribosome.</text>
</comment>
<comment type="similarity">
    <text evidence="1">Belongs to the universal ribosomal protein uL23 family.</text>
</comment>
<feature type="chain" id="PRO_1000068159" description="Large ribosomal subunit protein uL23">
    <location>
        <begin position="1"/>
        <end position="91"/>
    </location>
</feature>
<reference key="1">
    <citation type="journal article" date="2008" name="Antimicrob. Agents Chemother.">
        <title>Mutated response regulator graR is responsible for phenotypic conversion of Staphylococcus aureus from heterogeneous vancomycin-intermediate resistance to vancomycin-intermediate resistance.</title>
        <authorList>
            <person name="Neoh H.-M."/>
            <person name="Cui L."/>
            <person name="Yuzawa H."/>
            <person name="Takeuchi F."/>
            <person name="Matsuo M."/>
            <person name="Hiramatsu K."/>
        </authorList>
    </citation>
    <scope>NUCLEOTIDE SEQUENCE [LARGE SCALE GENOMIC DNA]</scope>
    <source>
        <strain>Mu3 / ATCC 700698</strain>
    </source>
</reference>
<accession>A7X5G1</accession>
<proteinExistence type="inferred from homology"/>
<dbReference type="EMBL" id="AP009324">
    <property type="protein sequence ID" value="BAF79115.1"/>
    <property type="molecule type" value="Genomic_DNA"/>
</dbReference>
<dbReference type="RefSeq" id="WP_000388082.1">
    <property type="nucleotide sequence ID" value="NZ_CTYB01000025.1"/>
</dbReference>
<dbReference type="SMR" id="A7X5G1"/>
<dbReference type="KEGG" id="saw:SAHV_2232"/>
<dbReference type="HOGENOM" id="CLU_037562_3_2_9"/>
<dbReference type="GO" id="GO:1990904">
    <property type="term" value="C:ribonucleoprotein complex"/>
    <property type="evidence" value="ECO:0007669"/>
    <property type="project" value="UniProtKB-KW"/>
</dbReference>
<dbReference type="GO" id="GO:0005840">
    <property type="term" value="C:ribosome"/>
    <property type="evidence" value="ECO:0007669"/>
    <property type="project" value="UniProtKB-KW"/>
</dbReference>
<dbReference type="GO" id="GO:0019843">
    <property type="term" value="F:rRNA binding"/>
    <property type="evidence" value="ECO:0007669"/>
    <property type="project" value="UniProtKB-UniRule"/>
</dbReference>
<dbReference type="GO" id="GO:0003735">
    <property type="term" value="F:structural constituent of ribosome"/>
    <property type="evidence" value="ECO:0007669"/>
    <property type="project" value="InterPro"/>
</dbReference>
<dbReference type="GO" id="GO:0006412">
    <property type="term" value="P:translation"/>
    <property type="evidence" value="ECO:0007669"/>
    <property type="project" value="UniProtKB-UniRule"/>
</dbReference>
<dbReference type="FunFam" id="3.30.70.330:FF:000001">
    <property type="entry name" value="50S ribosomal protein L23"/>
    <property type="match status" value="1"/>
</dbReference>
<dbReference type="Gene3D" id="3.30.70.330">
    <property type="match status" value="1"/>
</dbReference>
<dbReference type="HAMAP" id="MF_01369_B">
    <property type="entry name" value="Ribosomal_uL23_B"/>
    <property type="match status" value="1"/>
</dbReference>
<dbReference type="InterPro" id="IPR012677">
    <property type="entry name" value="Nucleotide-bd_a/b_plait_sf"/>
</dbReference>
<dbReference type="InterPro" id="IPR013025">
    <property type="entry name" value="Ribosomal_uL23-like"/>
</dbReference>
<dbReference type="InterPro" id="IPR012678">
    <property type="entry name" value="Ribosomal_uL23/eL15/eS24_sf"/>
</dbReference>
<dbReference type="NCBIfam" id="NF004363">
    <property type="entry name" value="PRK05738.2-4"/>
    <property type="match status" value="1"/>
</dbReference>
<dbReference type="PANTHER" id="PTHR11620">
    <property type="entry name" value="60S RIBOSOMAL PROTEIN L23A"/>
    <property type="match status" value="1"/>
</dbReference>
<dbReference type="Pfam" id="PF00276">
    <property type="entry name" value="Ribosomal_L23"/>
    <property type="match status" value="1"/>
</dbReference>
<dbReference type="SUPFAM" id="SSF54189">
    <property type="entry name" value="Ribosomal proteins S24e, L23 and L15e"/>
    <property type="match status" value="1"/>
</dbReference>
<gene>
    <name evidence="1" type="primary">rplW</name>
    <name type="ordered locus">SAHV_2232</name>
</gene>